<gene>
    <name evidence="1" type="primary">atpH</name>
    <name type="ordered locus">GOX1310</name>
</gene>
<name>ATPD_GLUOX</name>
<accession>Q5FRC8</accession>
<protein>
    <recommendedName>
        <fullName evidence="1">ATP synthase subunit delta</fullName>
    </recommendedName>
    <alternativeName>
        <fullName evidence="1">ATP synthase F(1) sector subunit delta</fullName>
    </alternativeName>
    <alternativeName>
        <fullName evidence="1">F-type ATPase subunit delta</fullName>
        <shortName evidence="1">F-ATPase subunit delta</shortName>
    </alternativeName>
</protein>
<proteinExistence type="inferred from homology"/>
<evidence type="ECO:0000255" key="1">
    <source>
        <dbReference type="HAMAP-Rule" id="MF_01416"/>
    </source>
</evidence>
<organism>
    <name type="scientific">Gluconobacter oxydans (strain 621H)</name>
    <name type="common">Gluconobacter suboxydans</name>
    <dbReference type="NCBI Taxonomy" id="290633"/>
    <lineage>
        <taxon>Bacteria</taxon>
        <taxon>Pseudomonadati</taxon>
        <taxon>Pseudomonadota</taxon>
        <taxon>Alphaproteobacteria</taxon>
        <taxon>Acetobacterales</taxon>
        <taxon>Acetobacteraceae</taxon>
        <taxon>Gluconobacter</taxon>
    </lineage>
</organism>
<keyword id="KW-0066">ATP synthesis</keyword>
<keyword id="KW-0997">Cell inner membrane</keyword>
<keyword id="KW-1003">Cell membrane</keyword>
<keyword id="KW-0139">CF(1)</keyword>
<keyword id="KW-0375">Hydrogen ion transport</keyword>
<keyword id="KW-0406">Ion transport</keyword>
<keyword id="KW-0472">Membrane</keyword>
<keyword id="KW-1185">Reference proteome</keyword>
<keyword id="KW-0813">Transport</keyword>
<comment type="function">
    <text evidence="1">F(1)F(0) ATP synthase produces ATP from ADP in the presence of a proton or sodium gradient. F-type ATPases consist of two structural domains, F(1) containing the extramembraneous catalytic core and F(0) containing the membrane proton channel, linked together by a central stalk and a peripheral stalk. During catalysis, ATP synthesis in the catalytic domain of F(1) is coupled via a rotary mechanism of the central stalk subunits to proton translocation.</text>
</comment>
<comment type="function">
    <text evidence="1">This protein is part of the stalk that links CF(0) to CF(1). It either transmits conformational changes from CF(0) to CF(1) or is implicated in proton conduction.</text>
</comment>
<comment type="subunit">
    <text evidence="1">F-type ATPases have 2 components, F(1) - the catalytic core - and F(0) - the membrane proton channel. F(1) has five subunits: alpha(3), beta(3), gamma(1), delta(1), epsilon(1). F(0) has three main subunits: a(1), b(2) and c(10-14). The alpha and beta chains form an alternating ring which encloses part of the gamma chain. F(1) is attached to F(0) by a central stalk formed by the gamma and epsilon chains, while a peripheral stalk is formed by the delta and b chains.</text>
</comment>
<comment type="subcellular location">
    <subcellularLocation>
        <location evidence="1">Cell inner membrane</location>
        <topology evidence="1">Peripheral membrane protein</topology>
    </subcellularLocation>
</comment>
<comment type="similarity">
    <text evidence="1">Belongs to the ATPase delta chain family.</text>
</comment>
<sequence length="220" mass="23807">MPGPDSFDARSRISRFRPHSAADLVRRNTRVTVTQVPQVGHTGGLAQRYARALYDLASEQGNLSDVLGEVKALRAAIAESDDLRKFLADARMDIRQGRTVSNVLMSKLGFGDVLRRFVGVIADNRRLPDLASILDGVLALDSALRGEVVAEVRSAQPLTDTQRSQLQARLAEAGYSRVSMTERTDAALLGGMTVRIGSTLFDTSIAGRLTRLQNAMKGAA</sequence>
<feature type="chain" id="PRO_0000370990" description="ATP synthase subunit delta">
    <location>
        <begin position="1"/>
        <end position="220"/>
    </location>
</feature>
<dbReference type="EMBL" id="CP000009">
    <property type="protein sequence ID" value="AAW61068.1"/>
    <property type="molecule type" value="Genomic_DNA"/>
</dbReference>
<dbReference type="SMR" id="Q5FRC8"/>
<dbReference type="STRING" id="290633.GOX1310"/>
<dbReference type="KEGG" id="gox:GOX1310"/>
<dbReference type="eggNOG" id="COG0712">
    <property type="taxonomic scope" value="Bacteria"/>
</dbReference>
<dbReference type="HOGENOM" id="CLU_085114_0_1_5"/>
<dbReference type="Proteomes" id="UP000006375">
    <property type="component" value="Chromosome"/>
</dbReference>
<dbReference type="GO" id="GO:0005886">
    <property type="term" value="C:plasma membrane"/>
    <property type="evidence" value="ECO:0007669"/>
    <property type="project" value="UniProtKB-SubCell"/>
</dbReference>
<dbReference type="GO" id="GO:0045259">
    <property type="term" value="C:proton-transporting ATP synthase complex"/>
    <property type="evidence" value="ECO:0007669"/>
    <property type="project" value="UniProtKB-KW"/>
</dbReference>
<dbReference type="GO" id="GO:0046933">
    <property type="term" value="F:proton-transporting ATP synthase activity, rotational mechanism"/>
    <property type="evidence" value="ECO:0007669"/>
    <property type="project" value="UniProtKB-UniRule"/>
</dbReference>
<dbReference type="Gene3D" id="1.10.520.20">
    <property type="entry name" value="N-terminal domain of the delta subunit of the F1F0-ATP synthase"/>
    <property type="match status" value="1"/>
</dbReference>
<dbReference type="HAMAP" id="MF_01416">
    <property type="entry name" value="ATP_synth_delta_bact"/>
    <property type="match status" value="1"/>
</dbReference>
<dbReference type="InterPro" id="IPR026015">
    <property type="entry name" value="ATP_synth_OSCP/delta_N_sf"/>
</dbReference>
<dbReference type="InterPro" id="IPR020781">
    <property type="entry name" value="ATPase_OSCP/d_CS"/>
</dbReference>
<dbReference type="InterPro" id="IPR000711">
    <property type="entry name" value="ATPase_OSCP/dsu"/>
</dbReference>
<dbReference type="NCBIfam" id="TIGR01145">
    <property type="entry name" value="ATP_synt_delta"/>
    <property type="match status" value="1"/>
</dbReference>
<dbReference type="PANTHER" id="PTHR11910">
    <property type="entry name" value="ATP SYNTHASE DELTA CHAIN"/>
    <property type="match status" value="1"/>
</dbReference>
<dbReference type="Pfam" id="PF00213">
    <property type="entry name" value="OSCP"/>
    <property type="match status" value="1"/>
</dbReference>
<dbReference type="PRINTS" id="PR00125">
    <property type="entry name" value="ATPASEDELTA"/>
</dbReference>
<dbReference type="SUPFAM" id="SSF47928">
    <property type="entry name" value="N-terminal domain of the delta subunit of the F1F0-ATP synthase"/>
    <property type="match status" value="1"/>
</dbReference>
<dbReference type="PROSITE" id="PS00389">
    <property type="entry name" value="ATPASE_DELTA"/>
    <property type="match status" value="1"/>
</dbReference>
<reference key="1">
    <citation type="journal article" date="2005" name="Nat. Biotechnol.">
        <title>Complete genome sequence of the acetic acid bacterium Gluconobacter oxydans.</title>
        <authorList>
            <person name="Prust C."/>
            <person name="Hoffmeister M."/>
            <person name="Liesegang H."/>
            <person name="Wiezer A."/>
            <person name="Fricke W.F."/>
            <person name="Ehrenreich A."/>
            <person name="Gottschalk G."/>
            <person name="Deppenmeier U."/>
        </authorList>
    </citation>
    <scope>NUCLEOTIDE SEQUENCE [LARGE SCALE GENOMIC DNA]</scope>
    <source>
        <strain>621H</strain>
    </source>
</reference>